<gene>
    <name evidence="1" type="primary">potA</name>
    <name type="ordered locus">PA14_17640</name>
</gene>
<dbReference type="EC" id="7.6.2.11" evidence="1"/>
<dbReference type="EMBL" id="CP000438">
    <property type="protein sequence ID" value="ABJ12840.1"/>
    <property type="molecule type" value="Genomic_DNA"/>
</dbReference>
<dbReference type="RefSeq" id="WP_003138039.1">
    <property type="nucleotide sequence ID" value="NZ_CP034244.1"/>
</dbReference>
<dbReference type="SMR" id="Q02R79"/>
<dbReference type="KEGG" id="pau:PA14_17640"/>
<dbReference type="PseudoCAP" id="PA14_17640"/>
<dbReference type="HOGENOM" id="CLU_000604_1_1_6"/>
<dbReference type="BioCyc" id="PAER208963:G1G74-1455-MONOMER"/>
<dbReference type="Proteomes" id="UP000000653">
    <property type="component" value="Chromosome"/>
</dbReference>
<dbReference type="GO" id="GO:0043190">
    <property type="term" value="C:ATP-binding cassette (ABC) transporter complex"/>
    <property type="evidence" value="ECO:0007669"/>
    <property type="project" value="InterPro"/>
</dbReference>
<dbReference type="GO" id="GO:0015417">
    <property type="term" value="F:ABC-type polyamine transporter activity"/>
    <property type="evidence" value="ECO:0007669"/>
    <property type="project" value="UniProtKB-EC"/>
</dbReference>
<dbReference type="GO" id="GO:0005524">
    <property type="term" value="F:ATP binding"/>
    <property type="evidence" value="ECO:0007669"/>
    <property type="project" value="UniProtKB-KW"/>
</dbReference>
<dbReference type="GO" id="GO:0016887">
    <property type="term" value="F:ATP hydrolysis activity"/>
    <property type="evidence" value="ECO:0007669"/>
    <property type="project" value="InterPro"/>
</dbReference>
<dbReference type="FunFam" id="3.40.50.300:FF:000133">
    <property type="entry name" value="Spermidine/putrescine import ATP-binding protein PotA"/>
    <property type="match status" value="1"/>
</dbReference>
<dbReference type="Gene3D" id="2.40.50.100">
    <property type="match status" value="1"/>
</dbReference>
<dbReference type="Gene3D" id="3.40.50.300">
    <property type="entry name" value="P-loop containing nucleotide triphosphate hydrolases"/>
    <property type="match status" value="1"/>
</dbReference>
<dbReference type="InterPro" id="IPR003593">
    <property type="entry name" value="AAA+_ATPase"/>
</dbReference>
<dbReference type="InterPro" id="IPR050093">
    <property type="entry name" value="ABC_SmlMolc_Importer"/>
</dbReference>
<dbReference type="InterPro" id="IPR003439">
    <property type="entry name" value="ABC_transporter-like_ATP-bd"/>
</dbReference>
<dbReference type="InterPro" id="IPR017871">
    <property type="entry name" value="ABC_transporter-like_CS"/>
</dbReference>
<dbReference type="InterPro" id="IPR008995">
    <property type="entry name" value="Mo/tungstate-bd_C_term_dom"/>
</dbReference>
<dbReference type="InterPro" id="IPR027417">
    <property type="entry name" value="P-loop_NTPase"/>
</dbReference>
<dbReference type="InterPro" id="IPR005893">
    <property type="entry name" value="PotA-like"/>
</dbReference>
<dbReference type="InterPro" id="IPR013611">
    <property type="entry name" value="Transp-assoc_OB_typ2"/>
</dbReference>
<dbReference type="NCBIfam" id="TIGR01187">
    <property type="entry name" value="potA"/>
    <property type="match status" value="1"/>
</dbReference>
<dbReference type="PANTHER" id="PTHR42781">
    <property type="entry name" value="SPERMIDINE/PUTRESCINE IMPORT ATP-BINDING PROTEIN POTA"/>
    <property type="match status" value="1"/>
</dbReference>
<dbReference type="PANTHER" id="PTHR42781:SF4">
    <property type="entry name" value="SPERMIDINE_PUTRESCINE IMPORT ATP-BINDING PROTEIN POTA"/>
    <property type="match status" value="1"/>
</dbReference>
<dbReference type="Pfam" id="PF00005">
    <property type="entry name" value="ABC_tran"/>
    <property type="match status" value="1"/>
</dbReference>
<dbReference type="Pfam" id="PF08402">
    <property type="entry name" value="TOBE_2"/>
    <property type="match status" value="1"/>
</dbReference>
<dbReference type="SMART" id="SM00382">
    <property type="entry name" value="AAA"/>
    <property type="match status" value="1"/>
</dbReference>
<dbReference type="SUPFAM" id="SSF50331">
    <property type="entry name" value="MOP-like"/>
    <property type="match status" value="1"/>
</dbReference>
<dbReference type="SUPFAM" id="SSF52540">
    <property type="entry name" value="P-loop containing nucleoside triphosphate hydrolases"/>
    <property type="match status" value="1"/>
</dbReference>
<dbReference type="PROSITE" id="PS00211">
    <property type="entry name" value="ABC_TRANSPORTER_1"/>
    <property type="match status" value="1"/>
</dbReference>
<dbReference type="PROSITE" id="PS50893">
    <property type="entry name" value="ABC_TRANSPORTER_2"/>
    <property type="match status" value="1"/>
</dbReference>
<dbReference type="PROSITE" id="PS51305">
    <property type="entry name" value="POTA"/>
    <property type="match status" value="1"/>
</dbReference>
<feature type="chain" id="PRO_0000286274" description="Spermidine/putrescine import ATP-binding protein PotA">
    <location>
        <begin position="1"/>
        <end position="363"/>
    </location>
</feature>
<feature type="domain" description="ABC transporter" evidence="1">
    <location>
        <begin position="6"/>
        <end position="236"/>
    </location>
</feature>
<feature type="binding site" evidence="1">
    <location>
        <begin position="38"/>
        <end position="45"/>
    </location>
    <ligand>
        <name>ATP</name>
        <dbReference type="ChEBI" id="CHEBI:30616"/>
    </ligand>
</feature>
<comment type="function">
    <text evidence="1">Part of the ABC transporter complex PotABCD involved in spermidine/putrescine import. Responsible for energy coupling to the transport system.</text>
</comment>
<comment type="catalytic activity">
    <reaction evidence="1">
        <text>ATP + H2O + polyamine-[polyamine-binding protein]Side 1 = ADP + phosphate + polyamineSide 2 + [polyamine-binding protein]Side 1.</text>
        <dbReference type="EC" id="7.6.2.11"/>
    </reaction>
</comment>
<comment type="subunit">
    <text evidence="1">The complex is composed of two ATP-binding proteins (PotA), two transmembrane proteins (PotB and PotC) and a solute-binding protein (PotD).</text>
</comment>
<comment type="subcellular location">
    <subcellularLocation>
        <location evidence="1">Cell inner membrane</location>
        <topology evidence="1">Peripheral membrane protein</topology>
    </subcellularLocation>
</comment>
<comment type="similarity">
    <text evidence="1">Belongs to the ABC transporter superfamily. Spermidine/putrescine importer (TC 3.A.1.11.1) family.</text>
</comment>
<keyword id="KW-0067">ATP-binding</keyword>
<keyword id="KW-0997">Cell inner membrane</keyword>
<keyword id="KW-1003">Cell membrane</keyword>
<keyword id="KW-0472">Membrane</keyword>
<keyword id="KW-0547">Nucleotide-binding</keyword>
<keyword id="KW-1278">Translocase</keyword>
<keyword id="KW-0813">Transport</keyword>
<sequence length="363" mass="40074">MTPPLLEIRNVTRRFGDFTAVDNVSLTINTGEFFTLLGPSGCGKTTLLRMLAGFDQPDSGEIRLNGQDLAGVEPEKRPVHTVFQSYALFPHMSVAQNIAFPLKMAGVAKSEIDARVEQALKDVRLADKGGRMPTQLSGGQRQRVAIARALVNRPRLLLLDEPLSALDAKLREEMQIELINLQKDVGITFVYVTHDQGEALALSHRIAVMNQGRVEQLDAPETIYSFPRSRFVADFIGQCNLLDATVEAVDGERVRIDLRGLGEVQALKSFDAQPGEACVLTLRPEKIRLAQSVTADSNEVHFRGRVAELLYLGDVTLYIVELENGERLETLLPNATPGRTKFFEVGDAVEAAWRFDAGHLVRA</sequence>
<organism>
    <name type="scientific">Pseudomonas aeruginosa (strain UCBPP-PA14)</name>
    <dbReference type="NCBI Taxonomy" id="208963"/>
    <lineage>
        <taxon>Bacteria</taxon>
        <taxon>Pseudomonadati</taxon>
        <taxon>Pseudomonadota</taxon>
        <taxon>Gammaproteobacteria</taxon>
        <taxon>Pseudomonadales</taxon>
        <taxon>Pseudomonadaceae</taxon>
        <taxon>Pseudomonas</taxon>
    </lineage>
</organism>
<reference key="1">
    <citation type="journal article" date="2006" name="Genome Biol.">
        <title>Genomic analysis reveals that Pseudomonas aeruginosa virulence is combinatorial.</title>
        <authorList>
            <person name="Lee D.G."/>
            <person name="Urbach J.M."/>
            <person name="Wu G."/>
            <person name="Liberati N.T."/>
            <person name="Feinbaum R.L."/>
            <person name="Miyata S."/>
            <person name="Diggins L.T."/>
            <person name="He J."/>
            <person name="Saucier M."/>
            <person name="Deziel E."/>
            <person name="Friedman L."/>
            <person name="Li L."/>
            <person name="Grills G."/>
            <person name="Montgomery K."/>
            <person name="Kucherlapati R."/>
            <person name="Rahme L.G."/>
            <person name="Ausubel F.M."/>
        </authorList>
    </citation>
    <scope>NUCLEOTIDE SEQUENCE [LARGE SCALE GENOMIC DNA]</scope>
    <source>
        <strain>UCBPP-PA14</strain>
    </source>
</reference>
<accession>Q02R79</accession>
<proteinExistence type="inferred from homology"/>
<evidence type="ECO:0000255" key="1">
    <source>
        <dbReference type="HAMAP-Rule" id="MF_01726"/>
    </source>
</evidence>
<name>POTA_PSEAB</name>
<protein>
    <recommendedName>
        <fullName evidence="1">Spermidine/putrescine import ATP-binding protein PotA</fullName>
        <ecNumber evidence="1">7.6.2.11</ecNumber>
    </recommendedName>
</protein>